<name>RS14_SHEWM</name>
<keyword id="KW-1185">Reference proteome</keyword>
<keyword id="KW-0687">Ribonucleoprotein</keyword>
<keyword id="KW-0689">Ribosomal protein</keyword>
<keyword id="KW-0694">RNA-binding</keyword>
<keyword id="KW-0699">rRNA-binding</keyword>
<organism>
    <name type="scientific">Shewanella woodyi (strain ATCC 51908 / MS32)</name>
    <dbReference type="NCBI Taxonomy" id="392500"/>
    <lineage>
        <taxon>Bacteria</taxon>
        <taxon>Pseudomonadati</taxon>
        <taxon>Pseudomonadota</taxon>
        <taxon>Gammaproteobacteria</taxon>
        <taxon>Alteromonadales</taxon>
        <taxon>Shewanellaceae</taxon>
        <taxon>Shewanella</taxon>
    </lineage>
</organism>
<reference key="1">
    <citation type="submission" date="2008-02" db="EMBL/GenBank/DDBJ databases">
        <title>Complete sequence of Shewanella woodyi ATCC 51908.</title>
        <authorList>
            <consortium name="US DOE Joint Genome Institute"/>
            <person name="Copeland A."/>
            <person name="Lucas S."/>
            <person name="Lapidus A."/>
            <person name="Glavina del Rio T."/>
            <person name="Dalin E."/>
            <person name="Tice H."/>
            <person name="Bruce D."/>
            <person name="Goodwin L."/>
            <person name="Pitluck S."/>
            <person name="Sims D."/>
            <person name="Brettin T."/>
            <person name="Detter J.C."/>
            <person name="Han C."/>
            <person name="Kuske C.R."/>
            <person name="Schmutz J."/>
            <person name="Larimer F."/>
            <person name="Land M."/>
            <person name="Hauser L."/>
            <person name="Kyrpides N."/>
            <person name="Lykidis A."/>
            <person name="Zhao J.-S."/>
            <person name="Richardson P."/>
        </authorList>
    </citation>
    <scope>NUCLEOTIDE SEQUENCE [LARGE SCALE GENOMIC DNA]</scope>
    <source>
        <strain>ATCC 51908 / MS32</strain>
    </source>
</reference>
<gene>
    <name evidence="1" type="primary">rpsN</name>
    <name type="ordered locus">Swoo_4677</name>
</gene>
<feature type="chain" id="PRO_1000128586" description="Small ribosomal subunit protein uS14">
    <location>
        <begin position="1"/>
        <end position="101"/>
    </location>
</feature>
<sequence>MAKSSMKAREVKRAKLVAKFAEKRLALKAIINNPTTSDDDRWDAVLKLQGLPRDSSAARQRNRCSQTGRPHGYLRKFGLSRIKLREATMRGEVPGLRKASW</sequence>
<accession>B1KMX0</accession>
<protein>
    <recommendedName>
        <fullName evidence="1">Small ribosomal subunit protein uS14</fullName>
    </recommendedName>
    <alternativeName>
        <fullName evidence="2">30S ribosomal protein S14</fullName>
    </alternativeName>
</protein>
<evidence type="ECO:0000255" key="1">
    <source>
        <dbReference type="HAMAP-Rule" id="MF_00537"/>
    </source>
</evidence>
<evidence type="ECO:0000305" key="2"/>
<dbReference type="EMBL" id="CP000961">
    <property type="protein sequence ID" value="ACA88927.1"/>
    <property type="molecule type" value="Genomic_DNA"/>
</dbReference>
<dbReference type="RefSeq" id="WP_012327250.1">
    <property type="nucleotide sequence ID" value="NC_010506.1"/>
</dbReference>
<dbReference type="SMR" id="B1KMX0"/>
<dbReference type="STRING" id="392500.Swoo_4677"/>
<dbReference type="KEGG" id="swd:Swoo_4677"/>
<dbReference type="eggNOG" id="COG0199">
    <property type="taxonomic scope" value="Bacteria"/>
</dbReference>
<dbReference type="HOGENOM" id="CLU_139869_0_1_6"/>
<dbReference type="Proteomes" id="UP000002168">
    <property type="component" value="Chromosome"/>
</dbReference>
<dbReference type="GO" id="GO:0005737">
    <property type="term" value="C:cytoplasm"/>
    <property type="evidence" value="ECO:0007669"/>
    <property type="project" value="UniProtKB-ARBA"/>
</dbReference>
<dbReference type="GO" id="GO:0015935">
    <property type="term" value="C:small ribosomal subunit"/>
    <property type="evidence" value="ECO:0007669"/>
    <property type="project" value="TreeGrafter"/>
</dbReference>
<dbReference type="GO" id="GO:0019843">
    <property type="term" value="F:rRNA binding"/>
    <property type="evidence" value="ECO:0007669"/>
    <property type="project" value="UniProtKB-UniRule"/>
</dbReference>
<dbReference type="GO" id="GO:0003735">
    <property type="term" value="F:structural constituent of ribosome"/>
    <property type="evidence" value="ECO:0007669"/>
    <property type="project" value="InterPro"/>
</dbReference>
<dbReference type="GO" id="GO:0006412">
    <property type="term" value="P:translation"/>
    <property type="evidence" value="ECO:0007669"/>
    <property type="project" value="UniProtKB-UniRule"/>
</dbReference>
<dbReference type="FunFam" id="1.10.287.1480:FF:000001">
    <property type="entry name" value="30S ribosomal protein S14"/>
    <property type="match status" value="1"/>
</dbReference>
<dbReference type="Gene3D" id="1.10.287.1480">
    <property type="match status" value="1"/>
</dbReference>
<dbReference type="HAMAP" id="MF_00537">
    <property type="entry name" value="Ribosomal_uS14_1"/>
    <property type="match status" value="1"/>
</dbReference>
<dbReference type="InterPro" id="IPR001209">
    <property type="entry name" value="Ribosomal_uS14"/>
</dbReference>
<dbReference type="InterPro" id="IPR023036">
    <property type="entry name" value="Ribosomal_uS14_bac/plastid"/>
</dbReference>
<dbReference type="InterPro" id="IPR018271">
    <property type="entry name" value="Ribosomal_uS14_CS"/>
</dbReference>
<dbReference type="NCBIfam" id="NF006477">
    <property type="entry name" value="PRK08881.1"/>
    <property type="match status" value="1"/>
</dbReference>
<dbReference type="PANTHER" id="PTHR19836">
    <property type="entry name" value="30S RIBOSOMAL PROTEIN S14"/>
    <property type="match status" value="1"/>
</dbReference>
<dbReference type="PANTHER" id="PTHR19836:SF19">
    <property type="entry name" value="SMALL RIBOSOMAL SUBUNIT PROTEIN US14M"/>
    <property type="match status" value="1"/>
</dbReference>
<dbReference type="Pfam" id="PF00253">
    <property type="entry name" value="Ribosomal_S14"/>
    <property type="match status" value="1"/>
</dbReference>
<dbReference type="SUPFAM" id="SSF57716">
    <property type="entry name" value="Glucocorticoid receptor-like (DNA-binding domain)"/>
    <property type="match status" value="1"/>
</dbReference>
<dbReference type="PROSITE" id="PS00527">
    <property type="entry name" value="RIBOSOMAL_S14"/>
    <property type="match status" value="1"/>
</dbReference>
<proteinExistence type="inferred from homology"/>
<comment type="function">
    <text evidence="1">Binds 16S rRNA, required for the assembly of 30S particles and may also be responsible for determining the conformation of the 16S rRNA at the A site.</text>
</comment>
<comment type="subunit">
    <text evidence="1">Part of the 30S ribosomal subunit. Contacts proteins S3 and S10.</text>
</comment>
<comment type="similarity">
    <text evidence="1">Belongs to the universal ribosomal protein uS14 family.</text>
</comment>